<keyword id="KW-0030">Aminoacyl-tRNA synthetase</keyword>
<keyword id="KW-0067">ATP-binding</keyword>
<keyword id="KW-0963">Cytoplasm</keyword>
<keyword id="KW-0436">Ligase</keyword>
<keyword id="KW-0460">Magnesium</keyword>
<keyword id="KW-0479">Metal-binding</keyword>
<keyword id="KW-0547">Nucleotide-binding</keyword>
<keyword id="KW-0648">Protein biosynthesis</keyword>
<keyword id="KW-0694">RNA-binding</keyword>
<keyword id="KW-0820">tRNA-binding</keyword>
<name>SYFB_XANC8</name>
<feature type="chain" id="PRO_0000232098" description="Phenylalanine--tRNA ligase beta subunit">
    <location>
        <begin position="1"/>
        <end position="791"/>
    </location>
</feature>
<feature type="domain" description="tRNA-binding" evidence="1">
    <location>
        <begin position="39"/>
        <end position="147"/>
    </location>
</feature>
<feature type="domain" description="B5" evidence="1">
    <location>
        <begin position="400"/>
        <end position="475"/>
    </location>
</feature>
<feature type="domain" description="FDX-ACB" evidence="1">
    <location>
        <begin position="697"/>
        <end position="790"/>
    </location>
</feature>
<feature type="binding site" evidence="1">
    <location>
        <position position="453"/>
    </location>
    <ligand>
        <name>Mg(2+)</name>
        <dbReference type="ChEBI" id="CHEBI:18420"/>
        <note>shared with alpha subunit</note>
    </ligand>
</feature>
<feature type="binding site" evidence="1">
    <location>
        <position position="459"/>
    </location>
    <ligand>
        <name>Mg(2+)</name>
        <dbReference type="ChEBI" id="CHEBI:18420"/>
        <note>shared with alpha subunit</note>
    </ligand>
</feature>
<feature type="binding site" evidence="1">
    <location>
        <position position="462"/>
    </location>
    <ligand>
        <name>Mg(2+)</name>
        <dbReference type="ChEBI" id="CHEBI:18420"/>
        <note>shared with alpha subunit</note>
    </ligand>
</feature>
<feature type="binding site" evidence="1">
    <location>
        <position position="463"/>
    </location>
    <ligand>
        <name>Mg(2+)</name>
        <dbReference type="ChEBI" id="CHEBI:18420"/>
        <note>shared with alpha subunit</note>
    </ligand>
</feature>
<comment type="catalytic activity">
    <reaction evidence="1">
        <text>tRNA(Phe) + L-phenylalanine + ATP = L-phenylalanyl-tRNA(Phe) + AMP + diphosphate + H(+)</text>
        <dbReference type="Rhea" id="RHEA:19413"/>
        <dbReference type="Rhea" id="RHEA-COMP:9668"/>
        <dbReference type="Rhea" id="RHEA-COMP:9699"/>
        <dbReference type="ChEBI" id="CHEBI:15378"/>
        <dbReference type="ChEBI" id="CHEBI:30616"/>
        <dbReference type="ChEBI" id="CHEBI:33019"/>
        <dbReference type="ChEBI" id="CHEBI:58095"/>
        <dbReference type="ChEBI" id="CHEBI:78442"/>
        <dbReference type="ChEBI" id="CHEBI:78531"/>
        <dbReference type="ChEBI" id="CHEBI:456215"/>
        <dbReference type="EC" id="6.1.1.20"/>
    </reaction>
</comment>
<comment type="cofactor">
    <cofactor evidence="1">
        <name>Mg(2+)</name>
        <dbReference type="ChEBI" id="CHEBI:18420"/>
    </cofactor>
    <text evidence="1">Binds 2 magnesium ions per tetramer.</text>
</comment>
<comment type="subunit">
    <text evidence="1">Tetramer of two alpha and two beta subunits.</text>
</comment>
<comment type="subcellular location">
    <subcellularLocation>
        <location evidence="1">Cytoplasm</location>
    </subcellularLocation>
</comment>
<comment type="similarity">
    <text evidence="1">Belongs to the phenylalanyl-tRNA synthetase beta subunit family. Type 1 subfamily.</text>
</comment>
<sequence>MKFSENWLRSHVPIQASREELAATLTAIGLEVEAVTPLGDALGQVVVARIIAAVRHPEADRLQVCSVDAGQGELLQIVCGAPNARAGLVAPLALVGAQIGELTIKAAKLRGVASNGMLCSAKELGLDSDASGLFELPDDAPVGQALAEYLGLPDASIEIKLTPNRADCFSVRGIAFDVAAACASEVAAFDAAAVAPVSTRTLAVELNAGSEAPRYCGRVIEGIDPAATTPVWMAERLRRSGVRPVSLLVDITQYVMLELGQPMHAFDLDTLHGPVGVRRSRAGEQLALLDGREVTLDDSFLTITDADRPVALAGLMGGLDTRVTNTTRNVFLESAYFDPAAIMGRGRKLGLHTDAGHRFERGVDPALAPQAIEVATRLVLELAGGMPGPVVDAALPHHLPQPASILLRRARIARVLGIQIDDADVARILTALGMHVEAAADGWQVTAPSRRFDIAIEEDLIEELARIHGYDRVPTTLPGGASRIAMPSETQLDELSVRRQLVARELQETINYAFVDAALLERWQLTDGVVPLANPLSAELAVMRPRLLPGLVATLGRNVARQVGRVRLFELGKVFSAAGPGDAPVESQQVAAAVCGDALALQWGEPARKVDFHDLKGDLLALAAASGAVLEFQPSTQPFGHPGRSADIYRDGVCIGWIGQVHPRLAKSLDIDVDVIAFELQLAPLVKRALPRAGELSRYPSMRRDLAFLVPDAVSWAALSASVRTSVGPLLREVQLFDRYVGQGVEPGFKSLAMGLILQDNSRTLTDRDVDAVVADVVAVIEREHRARIRG</sequence>
<accession>Q4UW52</accession>
<organism>
    <name type="scientific">Xanthomonas campestris pv. campestris (strain 8004)</name>
    <dbReference type="NCBI Taxonomy" id="314565"/>
    <lineage>
        <taxon>Bacteria</taxon>
        <taxon>Pseudomonadati</taxon>
        <taxon>Pseudomonadota</taxon>
        <taxon>Gammaproteobacteria</taxon>
        <taxon>Lysobacterales</taxon>
        <taxon>Lysobacteraceae</taxon>
        <taxon>Xanthomonas</taxon>
    </lineage>
</organism>
<dbReference type="EC" id="6.1.1.20" evidence="1"/>
<dbReference type="EMBL" id="CP000050">
    <property type="protein sequence ID" value="AAY48721.1"/>
    <property type="molecule type" value="Genomic_DNA"/>
</dbReference>
<dbReference type="RefSeq" id="WP_011037596.1">
    <property type="nucleotide sequence ID" value="NZ_CP155948.1"/>
</dbReference>
<dbReference type="SMR" id="Q4UW52"/>
<dbReference type="KEGG" id="xcb:XC_1655"/>
<dbReference type="HOGENOM" id="CLU_016891_0_0_6"/>
<dbReference type="Proteomes" id="UP000000420">
    <property type="component" value="Chromosome"/>
</dbReference>
<dbReference type="GO" id="GO:0009328">
    <property type="term" value="C:phenylalanine-tRNA ligase complex"/>
    <property type="evidence" value="ECO:0007669"/>
    <property type="project" value="TreeGrafter"/>
</dbReference>
<dbReference type="GO" id="GO:0005524">
    <property type="term" value="F:ATP binding"/>
    <property type="evidence" value="ECO:0007669"/>
    <property type="project" value="UniProtKB-UniRule"/>
</dbReference>
<dbReference type="GO" id="GO:0000287">
    <property type="term" value="F:magnesium ion binding"/>
    <property type="evidence" value="ECO:0007669"/>
    <property type="project" value="UniProtKB-UniRule"/>
</dbReference>
<dbReference type="GO" id="GO:0004826">
    <property type="term" value="F:phenylalanine-tRNA ligase activity"/>
    <property type="evidence" value="ECO:0007669"/>
    <property type="project" value="UniProtKB-UniRule"/>
</dbReference>
<dbReference type="GO" id="GO:0000049">
    <property type="term" value="F:tRNA binding"/>
    <property type="evidence" value="ECO:0007669"/>
    <property type="project" value="UniProtKB-KW"/>
</dbReference>
<dbReference type="GO" id="GO:0006432">
    <property type="term" value="P:phenylalanyl-tRNA aminoacylation"/>
    <property type="evidence" value="ECO:0007669"/>
    <property type="project" value="UniProtKB-UniRule"/>
</dbReference>
<dbReference type="CDD" id="cd00769">
    <property type="entry name" value="PheRS_beta_core"/>
    <property type="match status" value="1"/>
</dbReference>
<dbReference type="CDD" id="cd02796">
    <property type="entry name" value="tRNA_bind_bactPheRS"/>
    <property type="match status" value="1"/>
</dbReference>
<dbReference type="FunFam" id="2.40.50.140:FF:000045">
    <property type="entry name" value="Phenylalanine--tRNA ligase beta subunit"/>
    <property type="match status" value="1"/>
</dbReference>
<dbReference type="FunFam" id="3.30.56.10:FF:000002">
    <property type="entry name" value="Phenylalanine--tRNA ligase beta subunit"/>
    <property type="match status" value="1"/>
</dbReference>
<dbReference type="FunFam" id="3.30.70.380:FF:000001">
    <property type="entry name" value="Phenylalanine--tRNA ligase beta subunit"/>
    <property type="match status" value="1"/>
</dbReference>
<dbReference type="FunFam" id="3.30.930.10:FF:000022">
    <property type="entry name" value="Phenylalanine--tRNA ligase beta subunit"/>
    <property type="match status" value="1"/>
</dbReference>
<dbReference type="FunFam" id="3.50.40.10:FF:000001">
    <property type="entry name" value="Phenylalanine--tRNA ligase beta subunit"/>
    <property type="match status" value="1"/>
</dbReference>
<dbReference type="Gene3D" id="3.30.56.10">
    <property type="match status" value="2"/>
</dbReference>
<dbReference type="Gene3D" id="3.30.930.10">
    <property type="entry name" value="Bira Bifunctional Protein, Domain 2"/>
    <property type="match status" value="1"/>
</dbReference>
<dbReference type="Gene3D" id="3.30.70.380">
    <property type="entry name" value="Ferrodoxin-fold anticodon-binding domain"/>
    <property type="match status" value="1"/>
</dbReference>
<dbReference type="Gene3D" id="2.40.50.140">
    <property type="entry name" value="Nucleic acid-binding proteins"/>
    <property type="match status" value="1"/>
</dbReference>
<dbReference type="Gene3D" id="3.50.40.10">
    <property type="entry name" value="Phenylalanyl-trna Synthetase, Chain B, domain 3"/>
    <property type="match status" value="1"/>
</dbReference>
<dbReference type="HAMAP" id="MF_00283">
    <property type="entry name" value="Phe_tRNA_synth_beta1"/>
    <property type="match status" value="1"/>
</dbReference>
<dbReference type="InterPro" id="IPR045864">
    <property type="entry name" value="aa-tRNA-synth_II/BPL/LPL"/>
</dbReference>
<dbReference type="InterPro" id="IPR005146">
    <property type="entry name" value="B3/B4_tRNA-bd"/>
</dbReference>
<dbReference type="InterPro" id="IPR009061">
    <property type="entry name" value="DNA-bd_dom_put_sf"/>
</dbReference>
<dbReference type="InterPro" id="IPR005121">
    <property type="entry name" value="Fdx_antiC-bd"/>
</dbReference>
<dbReference type="InterPro" id="IPR036690">
    <property type="entry name" value="Fdx_antiC-bd_sf"/>
</dbReference>
<dbReference type="InterPro" id="IPR012340">
    <property type="entry name" value="NA-bd_OB-fold"/>
</dbReference>
<dbReference type="InterPro" id="IPR045060">
    <property type="entry name" value="Phe-tRNA-ligase_IIc_bsu"/>
</dbReference>
<dbReference type="InterPro" id="IPR004532">
    <property type="entry name" value="Phe-tRNA-ligase_IIc_bsu_bact"/>
</dbReference>
<dbReference type="InterPro" id="IPR020825">
    <property type="entry name" value="Phe-tRNA_synthase-like_B3/B4"/>
</dbReference>
<dbReference type="InterPro" id="IPR041616">
    <property type="entry name" value="PheRS_beta_core"/>
</dbReference>
<dbReference type="InterPro" id="IPR002547">
    <property type="entry name" value="tRNA-bd_dom"/>
</dbReference>
<dbReference type="InterPro" id="IPR033714">
    <property type="entry name" value="tRNA_bind_bactPheRS"/>
</dbReference>
<dbReference type="InterPro" id="IPR005147">
    <property type="entry name" value="tRNA_synthase_B5-dom"/>
</dbReference>
<dbReference type="NCBIfam" id="TIGR00472">
    <property type="entry name" value="pheT_bact"/>
    <property type="match status" value="1"/>
</dbReference>
<dbReference type="NCBIfam" id="NF045760">
    <property type="entry name" value="YtpR"/>
    <property type="match status" value="1"/>
</dbReference>
<dbReference type="PANTHER" id="PTHR10947:SF0">
    <property type="entry name" value="PHENYLALANINE--TRNA LIGASE BETA SUBUNIT"/>
    <property type="match status" value="1"/>
</dbReference>
<dbReference type="PANTHER" id="PTHR10947">
    <property type="entry name" value="PHENYLALANYL-TRNA SYNTHETASE BETA CHAIN AND LEUCINE-RICH REPEAT-CONTAINING PROTEIN 47"/>
    <property type="match status" value="1"/>
</dbReference>
<dbReference type="Pfam" id="PF03483">
    <property type="entry name" value="B3_4"/>
    <property type="match status" value="1"/>
</dbReference>
<dbReference type="Pfam" id="PF03484">
    <property type="entry name" value="B5"/>
    <property type="match status" value="1"/>
</dbReference>
<dbReference type="Pfam" id="PF03147">
    <property type="entry name" value="FDX-ACB"/>
    <property type="match status" value="1"/>
</dbReference>
<dbReference type="Pfam" id="PF01588">
    <property type="entry name" value="tRNA_bind"/>
    <property type="match status" value="1"/>
</dbReference>
<dbReference type="Pfam" id="PF17759">
    <property type="entry name" value="tRNA_synthFbeta"/>
    <property type="match status" value="1"/>
</dbReference>
<dbReference type="SMART" id="SM00873">
    <property type="entry name" value="B3_4"/>
    <property type="match status" value="1"/>
</dbReference>
<dbReference type="SMART" id="SM00874">
    <property type="entry name" value="B5"/>
    <property type="match status" value="1"/>
</dbReference>
<dbReference type="SMART" id="SM00896">
    <property type="entry name" value="FDX-ACB"/>
    <property type="match status" value="1"/>
</dbReference>
<dbReference type="SUPFAM" id="SSF54991">
    <property type="entry name" value="Anticodon-binding domain of PheRS"/>
    <property type="match status" value="1"/>
</dbReference>
<dbReference type="SUPFAM" id="SSF55681">
    <property type="entry name" value="Class II aaRS and biotin synthetases"/>
    <property type="match status" value="1"/>
</dbReference>
<dbReference type="SUPFAM" id="SSF50249">
    <property type="entry name" value="Nucleic acid-binding proteins"/>
    <property type="match status" value="1"/>
</dbReference>
<dbReference type="SUPFAM" id="SSF56037">
    <property type="entry name" value="PheT/TilS domain"/>
    <property type="match status" value="1"/>
</dbReference>
<dbReference type="SUPFAM" id="SSF46955">
    <property type="entry name" value="Putative DNA-binding domain"/>
    <property type="match status" value="1"/>
</dbReference>
<dbReference type="PROSITE" id="PS51483">
    <property type="entry name" value="B5"/>
    <property type="match status" value="1"/>
</dbReference>
<dbReference type="PROSITE" id="PS51447">
    <property type="entry name" value="FDX_ACB"/>
    <property type="match status" value="1"/>
</dbReference>
<dbReference type="PROSITE" id="PS50886">
    <property type="entry name" value="TRBD"/>
    <property type="match status" value="1"/>
</dbReference>
<evidence type="ECO:0000255" key="1">
    <source>
        <dbReference type="HAMAP-Rule" id="MF_00283"/>
    </source>
</evidence>
<gene>
    <name evidence="1" type="primary">pheT</name>
    <name type="ordered locus">XC_1655</name>
</gene>
<reference key="1">
    <citation type="journal article" date="2005" name="Genome Res.">
        <title>Comparative and functional genomic analyses of the pathogenicity of phytopathogen Xanthomonas campestris pv. campestris.</title>
        <authorList>
            <person name="Qian W."/>
            <person name="Jia Y."/>
            <person name="Ren S.-X."/>
            <person name="He Y.-Q."/>
            <person name="Feng J.-X."/>
            <person name="Lu L.-F."/>
            <person name="Sun Q."/>
            <person name="Ying G."/>
            <person name="Tang D.-J."/>
            <person name="Tang H."/>
            <person name="Wu W."/>
            <person name="Hao P."/>
            <person name="Wang L."/>
            <person name="Jiang B.-L."/>
            <person name="Zeng S."/>
            <person name="Gu W.-Y."/>
            <person name="Lu G."/>
            <person name="Rong L."/>
            <person name="Tian Y."/>
            <person name="Yao Z."/>
            <person name="Fu G."/>
            <person name="Chen B."/>
            <person name="Fang R."/>
            <person name="Qiang B."/>
            <person name="Chen Z."/>
            <person name="Zhao G.-P."/>
            <person name="Tang J.-L."/>
            <person name="He C."/>
        </authorList>
    </citation>
    <scope>NUCLEOTIDE SEQUENCE [LARGE SCALE GENOMIC DNA]</scope>
    <source>
        <strain>8004</strain>
    </source>
</reference>
<protein>
    <recommendedName>
        <fullName evidence="1">Phenylalanine--tRNA ligase beta subunit</fullName>
        <ecNumber evidence="1">6.1.1.20</ecNumber>
    </recommendedName>
    <alternativeName>
        <fullName evidence="1">Phenylalanyl-tRNA synthetase beta subunit</fullName>
        <shortName evidence="1">PheRS</shortName>
    </alternativeName>
</protein>
<proteinExistence type="inferred from homology"/>